<sequence>MSQIFADRRAAVPARVISFCGAALAVWAGLAVQPAMAVDPPVDCGRALGLHFWSSASLISDQTPDGTLIGKPVVGRSLLSKSCKVPDDIKEDLSDNHDGEPVDIVLELGSNYKIRPQSYGHPGIVVDLPFGSTEETGIAIYIDFGSSPMQKVGERQWLYPQKGEVLFDVLTINGDNAEVRYQAIKVGPLKRPRKLVLSQFPNLFTYKWVFMRGTSQERVLAQGTIDTDVATSTIDLKTCRYTSQTVSLPIIQRSALTGVGTTLGMTDFQMPFWCYGWPKVSVYMSATKTQTGVDGVALPATGQAAGMASGVGVQLINGKTQQPVKLGLQGKIALPEAQQTESATFSLPMKAQYYQTSTSTSAGKLSVTYAVTLNYD</sequence>
<feature type="signal peptide" evidence="1">
    <location>
        <begin position="1"/>
        <end position="37"/>
    </location>
</feature>
<feature type="chain" id="PRO_0000021253" description="Protein FhaE">
    <location>
        <begin position="38"/>
        <end position="376"/>
    </location>
</feature>
<proteinExistence type="inferred from homology"/>
<comment type="sequence caution" evidence="2">
    <conflict type="erroneous initiation">
        <sequence resource="EMBL-CDS" id="CAE42166"/>
    </conflict>
</comment>
<name>FHAE_BORPE</name>
<protein>
    <recommendedName>
        <fullName>Protein FhaE</fullName>
    </recommendedName>
</protein>
<dbReference type="EMBL" id="X66729">
    <property type="protein sequence ID" value="CAA47267.1"/>
    <property type="molecule type" value="Genomic_DNA"/>
</dbReference>
<dbReference type="EMBL" id="X64876">
    <property type="protein sequence ID" value="CAA46091.1"/>
    <property type="molecule type" value="Genomic_DNA"/>
</dbReference>
<dbReference type="EMBL" id="BX640416">
    <property type="protein sequence ID" value="CAE42166.1"/>
    <property type="status" value="ALT_INIT"/>
    <property type="molecule type" value="Genomic_DNA"/>
</dbReference>
<dbReference type="PIR" id="S36247">
    <property type="entry name" value="S36247"/>
</dbReference>
<dbReference type="RefSeq" id="NP_880574.1">
    <property type="nucleotide sequence ID" value="NC_002929.2"/>
</dbReference>
<dbReference type="RefSeq" id="WP_050849356.1">
    <property type="nucleotide sequence ID" value="NC_002929.2"/>
</dbReference>
<dbReference type="SMR" id="Q00879"/>
<dbReference type="STRING" id="257313.BP1883"/>
<dbReference type="PaxDb" id="257313-BP1883"/>
<dbReference type="KEGG" id="bpe:BP1883"/>
<dbReference type="PATRIC" id="fig|257313.5.peg.2021"/>
<dbReference type="eggNOG" id="COG3539">
    <property type="taxonomic scope" value="Bacteria"/>
</dbReference>
<dbReference type="HOGENOM" id="CLU_757931_0_0_4"/>
<dbReference type="Proteomes" id="UP000002676">
    <property type="component" value="Chromosome"/>
</dbReference>
<dbReference type="GO" id="GO:0009289">
    <property type="term" value="C:pilus"/>
    <property type="evidence" value="ECO:0007669"/>
    <property type="project" value="InterPro"/>
</dbReference>
<dbReference type="GO" id="GO:0043709">
    <property type="term" value="P:cell adhesion involved in single-species biofilm formation"/>
    <property type="evidence" value="ECO:0007669"/>
    <property type="project" value="TreeGrafter"/>
</dbReference>
<dbReference type="Gene3D" id="2.60.40.1090">
    <property type="entry name" value="Fimbrial-type adhesion domain"/>
    <property type="match status" value="1"/>
</dbReference>
<dbReference type="InterPro" id="IPR000259">
    <property type="entry name" value="Adhesion_dom_fimbrial"/>
</dbReference>
<dbReference type="InterPro" id="IPR036937">
    <property type="entry name" value="Adhesion_dom_fimbrial_sf"/>
</dbReference>
<dbReference type="InterPro" id="IPR008966">
    <property type="entry name" value="Adhesion_dom_sf"/>
</dbReference>
<dbReference type="InterPro" id="IPR050263">
    <property type="entry name" value="Bact_Fimbrial_Adh_Pro"/>
</dbReference>
<dbReference type="PANTHER" id="PTHR33420:SF3">
    <property type="entry name" value="FIMBRIAL SUBUNIT ELFA"/>
    <property type="match status" value="1"/>
</dbReference>
<dbReference type="PANTHER" id="PTHR33420">
    <property type="entry name" value="FIMBRIAL SUBUNIT ELFA-RELATED"/>
    <property type="match status" value="1"/>
</dbReference>
<dbReference type="Pfam" id="PF00419">
    <property type="entry name" value="Fimbrial"/>
    <property type="match status" value="1"/>
</dbReference>
<dbReference type="SUPFAM" id="SSF49401">
    <property type="entry name" value="Bacterial adhesins"/>
    <property type="match status" value="1"/>
</dbReference>
<evidence type="ECO:0000255" key="1"/>
<evidence type="ECO:0000305" key="2"/>
<keyword id="KW-1185">Reference proteome</keyword>
<keyword id="KW-0732">Signal</keyword>
<reference key="1">
    <citation type="journal article" date="1992" name="EMBO J.">
        <title>Common accessory genes for the Bordetella pertussis filamentous hemagglutinin and fimbriae share sequence similarities with the papC and papD gene families.</title>
        <authorList>
            <person name="Locht C."/>
            <person name="Geoffroy M.C."/>
            <person name="Renauld G."/>
        </authorList>
    </citation>
    <scope>NUCLEOTIDE SEQUENCE [GENOMIC DNA]</scope>
    <source>
        <strain>Tohama I / ATCC BAA-589 / NCTC 13251</strain>
    </source>
</reference>
<reference key="2">
    <citation type="journal article" date="1993" name="Mol. Microbiol.">
        <title>Isolation of a putative fimbrial adhesin from Bordetella pertussis and the identification of its gene.</title>
        <authorList>
            <person name="Willems R.J.L."/>
            <person name="Geuijen C."/>
            <person name="van der Heide H.G.J."/>
            <person name="Matheson M."/>
            <person name="Robinson A."/>
            <person name="Versluis L.F."/>
            <person name="Ebberink R."/>
            <person name="Theelen J."/>
            <person name="Mooi F.R."/>
        </authorList>
    </citation>
    <scope>NUCLEOTIDE SEQUENCE [GENOMIC DNA]</scope>
</reference>
<reference key="3">
    <citation type="journal article" date="2003" name="Nat. Genet.">
        <title>Comparative analysis of the genome sequences of Bordetella pertussis, Bordetella parapertussis and Bordetella bronchiseptica.</title>
        <authorList>
            <person name="Parkhill J."/>
            <person name="Sebaihia M."/>
            <person name="Preston A."/>
            <person name="Murphy L.D."/>
            <person name="Thomson N.R."/>
            <person name="Harris D.E."/>
            <person name="Holden M.T.G."/>
            <person name="Churcher C.M."/>
            <person name="Bentley S.D."/>
            <person name="Mungall K.L."/>
            <person name="Cerdeno-Tarraga A.-M."/>
            <person name="Temple L."/>
            <person name="James K.D."/>
            <person name="Harris B."/>
            <person name="Quail M.A."/>
            <person name="Achtman M."/>
            <person name="Atkin R."/>
            <person name="Baker S."/>
            <person name="Basham D."/>
            <person name="Bason N."/>
            <person name="Cherevach I."/>
            <person name="Chillingworth T."/>
            <person name="Collins M."/>
            <person name="Cronin A."/>
            <person name="Davis P."/>
            <person name="Doggett J."/>
            <person name="Feltwell T."/>
            <person name="Goble A."/>
            <person name="Hamlin N."/>
            <person name="Hauser H."/>
            <person name="Holroyd S."/>
            <person name="Jagels K."/>
            <person name="Leather S."/>
            <person name="Moule S."/>
            <person name="Norberczak H."/>
            <person name="O'Neil S."/>
            <person name="Ormond D."/>
            <person name="Price C."/>
            <person name="Rabbinowitsch E."/>
            <person name="Rutter S."/>
            <person name="Sanders M."/>
            <person name="Saunders D."/>
            <person name="Seeger K."/>
            <person name="Sharp S."/>
            <person name="Simmonds M."/>
            <person name="Skelton J."/>
            <person name="Squares R."/>
            <person name="Squares S."/>
            <person name="Stevens K."/>
            <person name="Unwin L."/>
            <person name="Whitehead S."/>
            <person name="Barrell B.G."/>
            <person name="Maskell D.J."/>
        </authorList>
    </citation>
    <scope>NUCLEOTIDE SEQUENCE [LARGE SCALE GENOMIC DNA]</scope>
    <source>
        <strain>Tohama I / ATCC BAA-589 / NCTC 13251</strain>
    </source>
</reference>
<gene>
    <name type="primary">fhaE</name>
    <name type="synonym">fimD</name>
    <name type="ordered locus">BP1883</name>
</gene>
<organism>
    <name type="scientific">Bordetella pertussis (strain Tohama I / ATCC BAA-589 / NCTC 13251)</name>
    <dbReference type="NCBI Taxonomy" id="257313"/>
    <lineage>
        <taxon>Bacteria</taxon>
        <taxon>Pseudomonadati</taxon>
        <taxon>Pseudomonadota</taxon>
        <taxon>Betaproteobacteria</taxon>
        <taxon>Burkholderiales</taxon>
        <taxon>Alcaligenaceae</taxon>
        <taxon>Bordetella</taxon>
    </lineage>
</organism>
<accession>Q00879</accession>